<dbReference type="EMBL" id="AF248617">
    <property type="protein sequence ID" value="AAG22602.1"/>
    <property type="molecule type" value="Genomic_DNA"/>
</dbReference>
<dbReference type="EMBL" id="AF198091">
    <property type="protein sequence ID" value="AAK01314.1"/>
    <property type="molecule type" value="Genomic_DNA"/>
</dbReference>
<dbReference type="RefSeq" id="YP_010994603.1">
    <property type="nucleotide sequence ID" value="NC_084417.1"/>
</dbReference>
<dbReference type="GeneID" id="86145288"/>
<dbReference type="GO" id="GO:0009507">
    <property type="term" value="C:chloroplast"/>
    <property type="evidence" value="ECO:0007669"/>
    <property type="project" value="UniProtKB-SubCell"/>
</dbReference>
<dbReference type="GO" id="GO:0003723">
    <property type="term" value="F:RNA binding"/>
    <property type="evidence" value="ECO:0007669"/>
    <property type="project" value="UniProtKB-KW"/>
</dbReference>
<dbReference type="GO" id="GO:0006397">
    <property type="term" value="P:mRNA processing"/>
    <property type="evidence" value="ECO:0007669"/>
    <property type="project" value="UniProtKB-KW"/>
</dbReference>
<dbReference type="GO" id="GO:0008380">
    <property type="term" value="P:RNA splicing"/>
    <property type="evidence" value="ECO:0007669"/>
    <property type="project" value="UniProtKB-UniRule"/>
</dbReference>
<dbReference type="GO" id="GO:0008033">
    <property type="term" value="P:tRNA processing"/>
    <property type="evidence" value="ECO:0007669"/>
    <property type="project" value="UniProtKB-KW"/>
</dbReference>
<dbReference type="HAMAP" id="MF_01390">
    <property type="entry name" value="MatK"/>
    <property type="match status" value="1"/>
</dbReference>
<dbReference type="InterPro" id="IPR024937">
    <property type="entry name" value="Domain_X"/>
</dbReference>
<dbReference type="InterPro" id="IPR002866">
    <property type="entry name" value="Maturase_MatK"/>
</dbReference>
<dbReference type="InterPro" id="IPR024942">
    <property type="entry name" value="Maturase_MatK_N"/>
</dbReference>
<dbReference type="PANTHER" id="PTHR34811">
    <property type="entry name" value="MATURASE K"/>
    <property type="match status" value="1"/>
</dbReference>
<dbReference type="PANTHER" id="PTHR34811:SF1">
    <property type="entry name" value="MATURASE K"/>
    <property type="match status" value="1"/>
</dbReference>
<dbReference type="Pfam" id="PF01348">
    <property type="entry name" value="Intron_maturas2"/>
    <property type="match status" value="1"/>
</dbReference>
<dbReference type="Pfam" id="PF01824">
    <property type="entry name" value="MatK_N"/>
    <property type="match status" value="1"/>
</dbReference>
<protein>
    <recommendedName>
        <fullName evidence="1">Maturase K</fullName>
    </recommendedName>
    <alternativeName>
        <fullName evidence="1">Intron maturase</fullName>
    </alternativeName>
</protein>
<accession>Q9GGJ8</accession>
<accession>Q9BCI4</accession>
<comment type="function">
    <text evidence="1">Usually encoded in the trnK tRNA gene intron. Probably assists in splicing its own and other chloroplast group II introns.</text>
</comment>
<comment type="subcellular location">
    <subcellularLocation>
        <location>Plastid</location>
        <location>Chloroplast</location>
    </subcellularLocation>
</comment>
<comment type="similarity">
    <text evidence="1">Belongs to the intron maturase 2 family. MatK subfamily.</text>
</comment>
<reference key="1">
    <citation type="journal article" date="2000" name="Harv. Pap. Bot.">
        <title>Phylogeny and biogeography of Hamamelis (Hamamelidaceae).</title>
        <authorList>
            <person name="Li J."/>
            <person name="Bogle A.L."/>
            <person name="Klein A.S."/>
            <person name="Donoghue M.J."/>
        </authorList>
    </citation>
    <scope>NUCLEOTIDE SEQUENCE [GENOMIC DNA]</scope>
</reference>
<reference key="2">
    <citation type="submission" date="2000-01" db="EMBL/GenBank/DDBJ databases">
        <title>Molecular phylogenetics of Mytilarioideae (Hamamelidaceae): a comparative analysis based on the its, matk, and rbcl sequences.</title>
        <authorList>
            <person name="Shi S."/>
            <person name="Huang Y."/>
            <person name="Zhang Q."/>
            <person name="Zhong Y."/>
            <person name="Chang H."/>
        </authorList>
    </citation>
    <scope>NUCLEOTIDE SEQUENCE [GENOMIC DNA]</scope>
    <source>
        <strain>2463</strain>
    </source>
</reference>
<evidence type="ECO:0000255" key="1">
    <source>
        <dbReference type="HAMAP-Rule" id="MF_01390"/>
    </source>
</evidence>
<evidence type="ECO:0000305" key="2"/>
<sequence length="504" mass="59195">MEEFQGYLELDKSRQHDFLYPLIFQEYIYALAHDHGLNRSILLENVGYDNKSSSLIVKRLITRMYQQNHLIISVNDSNQNPFLGHNKNLYSQMISEGFAVIVEIPFSLRSVSSLEGKEIVQSHNLRSIHSIFPFLEDKFLHLNYVSDILIPHPIHLEILVQTLRYWVKDASSLHLLRFFFYEYYNWNSLITPKKSISIFSKRNQRLFLFLYNSHVCEYESIFLFFRNQSSYLRSTSSGALLERIYFYGKIKHLVEVFVNDFQAILWLFKDPFMHYVRYQGKSILASKGTPLLMNKWKYYLVNFWQCHFYVWSQPGRIYINQLSNHSFDFLGYLSSVGLNPSVVRSQMLENSFIIDNAIKKFDIIVPIIPLIGSLAKAKFCNVLGHPISKPARADSSDSDIIDRFVRICRNLSHYHSGSSKKKSLYRIKYILRLSCARTLARKHKSTVRAFLKRLGSGLLEEFLTEEEQVLSLIFPKASSTSRRLYRGRIWYFDIISINDLANHE</sequence>
<proteinExistence type="inferred from homology"/>
<feature type="chain" id="PRO_0000143413" description="Maturase K">
    <location>
        <begin position="1"/>
        <end position="504"/>
    </location>
</feature>
<feature type="sequence conflict" description="In Ref. 2; AAK01314." evidence="2" ref="2">
    <original>H</original>
    <variation>P</variation>
    <location>
        <position position="16"/>
    </location>
</feature>
<feature type="sequence conflict" description="In Ref. 2; AAK01314." evidence="2" ref="2">
    <original>A</original>
    <variation>D</variation>
    <location>
        <position position="32"/>
    </location>
</feature>
<feature type="sequence conflict" description="In Ref. 2; AAK01314." evidence="2" ref="2">
    <original>E</original>
    <variation>G</variation>
    <location>
        <position position="44"/>
    </location>
</feature>
<feature type="sequence conflict" description="In Ref. 2; AAK01314." evidence="2" ref="2">
    <original>H</original>
    <variation>Y</variation>
    <location>
        <position position="503"/>
    </location>
</feature>
<keyword id="KW-0150">Chloroplast</keyword>
<keyword id="KW-0507">mRNA processing</keyword>
<keyword id="KW-0934">Plastid</keyword>
<keyword id="KW-0694">RNA-binding</keyword>
<keyword id="KW-0819">tRNA processing</keyword>
<organism>
    <name type="scientific">Hamamelis japonica</name>
    <name type="common">Japanese witch hazel</name>
    <dbReference type="NCBI Taxonomy" id="63355"/>
    <lineage>
        <taxon>Eukaryota</taxon>
        <taxon>Viridiplantae</taxon>
        <taxon>Streptophyta</taxon>
        <taxon>Embryophyta</taxon>
        <taxon>Tracheophyta</taxon>
        <taxon>Spermatophyta</taxon>
        <taxon>Magnoliopsida</taxon>
        <taxon>eudicotyledons</taxon>
        <taxon>Gunneridae</taxon>
        <taxon>Pentapetalae</taxon>
        <taxon>Saxifragales</taxon>
        <taxon>Hamamelidaceae</taxon>
        <taxon>Hamamelis</taxon>
    </lineage>
</organism>
<gene>
    <name evidence="1" type="primary">matK</name>
</gene>
<geneLocation type="chloroplast"/>
<name>MATK_HAMJA</name>